<organism>
    <name type="scientific">Baumannia cicadellinicola subsp. Homalodisca coagulata</name>
    <dbReference type="NCBI Taxonomy" id="374463"/>
    <lineage>
        <taxon>Bacteria</taxon>
        <taxon>Pseudomonadati</taxon>
        <taxon>Pseudomonadota</taxon>
        <taxon>Gammaproteobacteria</taxon>
        <taxon>Candidatus Palibaumannia</taxon>
    </lineage>
</organism>
<name>NUOK_BAUCH</name>
<feature type="chain" id="PRO_0000389956" description="NADH-quinone oxidoreductase subunit K">
    <location>
        <begin position="1"/>
        <end position="100"/>
    </location>
</feature>
<feature type="transmembrane region" description="Helical" evidence="1">
    <location>
        <begin position="4"/>
        <end position="24"/>
    </location>
</feature>
<feature type="transmembrane region" description="Helical" evidence="1">
    <location>
        <begin position="29"/>
        <end position="49"/>
    </location>
</feature>
<feature type="transmembrane region" description="Helical" evidence="1">
    <location>
        <begin position="60"/>
        <end position="80"/>
    </location>
</feature>
<keyword id="KW-1003">Cell membrane</keyword>
<keyword id="KW-0472">Membrane</keyword>
<keyword id="KW-0520">NAD</keyword>
<keyword id="KW-0874">Quinone</keyword>
<keyword id="KW-1185">Reference proteome</keyword>
<keyword id="KW-1278">Translocase</keyword>
<keyword id="KW-0812">Transmembrane</keyword>
<keyword id="KW-1133">Transmembrane helix</keyword>
<keyword id="KW-0813">Transport</keyword>
<keyword id="KW-0830">Ubiquinone</keyword>
<evidence type="ECO:0000255" key="1">
    <source>
        <dbReference type="HAMAP-Rule" id="MF_01456"/>
    </source>
</evidence>
<sequence>MISLSYSLSLAAILFMLGLTGIMIRRNLLFLLLGLEIMINAAALAFVIVGQYWGQADGQVMYILTVTIAATEASIGLALLLHLYRYYQTLDIDLISEMHR</sequence>
<dbReference type="EC" id="7.1.1.-" evidence="1"/>
<dbReference type="EMBL" id="CP000238">
    <property type="protein sequence ID" value="ABF14223.1"/>
    <property type="molecule type" value="Genomic_DNA"/>
</dbReference>
<dbReference type="RefSeq" id="WP_011520549.1">
    <property type="nucleotide sequence ID" value="NC_007984.1"/>
</dbReference>
<dbReference type="SMR" id="Q1LT98"/>
<dbReference type="STRING" id="374463.BCI_0372"/>
<dbReference type="KEGG" id="bci:BCI_0372"/>
<dbReference type="HOGENOM" id="CLU_144724_0_1_6"/>
<dbReference type="OrthoDB" id="9801357at2"/>
<dbReference type="Proteomes" id="UP000002427">
    <property type="component" value="Chromosome"/>
</dbReference>
<dbReference type="GO" id="GO:0030964">
    <property type="term" value="C:NADH dehydrogenase complex"/>
    <property type="evidence" value="ECO:0007669"/>
    <property type="project" value="TreeGrafter"/>
</dbReference>
<dbReference type="GO" id="GO:0005886">
    <property type="term" value="C:plasma membrane"/>
    <property type="evidence" value="ECO:0007669"/>
    <property type="project" value="UniProtKB-SubCell"/>
</dbReference>
<dbReference type="GO" id="GO:0050136">
    <property type="term" value="F:NADH:ubiquinone reductase (non-electrogenic) activity"/>
    <property type="evidence" value="ECO:0007669"/>
    <property type="project" value="UniProtKB-UniRule"/>
</dbReference>
<dbReference type="GO" id="GO:0048038">
    <property type="term" value="F:quinone binding"/>
    <property type="evidence" value="ECO:0007669"/>
    <property type="project" value="UniProtKB-KW"/>
</dbReference>
<dbReference type="GO" id="GO:0042773">
    <property type="term" value="P:ATP synthesis coupled electron transport"/>
    <property type="evidence" value="ECO:0007669"/>
    <property type="project" value="InterPro"/>
</dbReference>
<dbReference type="FunFam" id="1.10.287.3510:FF:000001">
    <property type="entry name" value="NADH-quinone oxidoreductase subunit K"/>
    <property type="match status" value="1"/>
</dbReference>
<dbReference type="Gene3D" id="1.10.287.3510">
    <property type="match status" value="1"/>
</dbReference>
<dbReference type="HAMAP" id="MF_01456">
    <property type="entry name" value="NDH1_NuoK"/>
    <property type="match status" value="1"/>
</dbReference>
<dbReference type="InterPro" id="IPR001133">
    <property type="entry name" value="NADH_UbQ_OxRdtase_chain4L/K"/>
</dbReference>
<dbReference type="InterPro" id="IPR039428">
    <property type="entry name" value="NUOK/Mnh_C1-like"/>
</dbReference>
<dbReference type="NCBIfam" id="NF004319">
    <property type="entry name" value="PRK05715.1-1"/>
    <property type="match status" value="1"/>
</dbReference>
<dbReference type="NCBIfam" id="NF004320">
    <property type="entry name" value="PRK05715.1-2"/>
    <property type="match status" value="1"/>
</dbReference>
<dbReference type="PANTHER" id="PTHR11434:SF16">
    <property type="entry name" value="NADH-UBIQUINONE OXIDOREDUCTASE CHAIN 4L"/>
    <property type="match status" value="1"/>
</dbReference>
<dbReference type="PANTHER" id="PTHR11434">
    <property type="entry name" value="NADH-UBIQUINONE OXIDOREDUCTASE SUBUNIT ND4L"/>
    <property type="match status" value="1"/>
</dbReference>
<dbReference type="Pfam" id="PF00420">
    <property type="entry name" value="Oxidored_q2"/>
    <property type="match status" value="1"/>
</dbReference>
<gene>
    <name evidence="1" type="primary">nuoK</name>
    <name type="ordered locus">BCI_0372</name>
</gene>
<protein>
    <recommendedName>
        <fullName evidence="1">NADH-quinone oxidoreductase subunit K</fullName>
        <ecNumber evidence="1">7.1.1.-</ecNumber>
    </recommendedName>
    <alternativeName>
        <fullName evidence="1">NADH dehydrogenase I subunit K</fullName>
    </alternativeName>
    <alternativeName>
        <fullName evidence="1">NDH-1 subunit K</fullName>
    </alternativeName>
</protein>
<comment type="function">
    <text evidence="1">NDH-1 shuttles electrons from NADH, via FMN and iron-sulfur (Fe-S) centers, to quinones in the respiratory chain. The immediate electron acceptor for the enzyme in this species is believed to be ubiquinone. Couples the redox reaction to proton translocation (for every two electrons transferred, four hydrogen ions are translocated across the cytoplasmic membrane), and thus conserves the redox energy in a proton gradient.</text>
</comment>
<comment type="catalytic activity">
    <reaction evidence="1">
        <text>a quinone + NADH + 5 H(+)(in) = a quinol + NAD(+) + 4 H(+)(out)</text>
        <dbReference type="Rhea" id="RHEA:57888"/>
        <dbReference type="ChEBI" id="CHEBI:15378"/>
        <dbReference type="ChEBI" id="CHEBI:24646"/>
        <dbReference type="ChEBI" id="CHEBI:57540"/>
        <dbReference type="ChEBI" id="CHEBI:57945"/>
        <dbReference type="ChEBI" id="CHEBI:132124"/>
    </reaction>
</comment>
<comment type="subunit">
    <text evidence="1">NDH-1 is composed of 14 different subunits. Subunits NuoA, H, J, K, L, M, N constitute the membrane sector of the complex.</text>
</comment>
<comment type="subcellular location">
    <subcellularLocation>
        <location evidence="1">Cell membrane</location>
        <topology evidence="1">Multi-pass membrane protein</topology>
    </subcellularLocation>
</comment>
<comment type="similarity">
    <text evidence="1">Belongs to the complex I subunit 4L family.</text>
</comment>
<reference key="1">
    <citation type="journal article" date="2006" name="PLoS Biol.">
        <title>Metabolic complementarity and genomics of the dual bacterial symbiosis of sharpshooters.</title>
        <authorList>
            <person name="Wu D."/>
            <person name="Daugherty S.C."/>
            <person name="Van Aken S.E."/>
            <person name="Pai G.H."/>
            <person name="Watkins K.L."/>
            <person name="Khouri H."/>
            <person name="Tallon L.J."/>
            <person name="Zaborsky J.M."/>
            <person name="Dunbar H.E."/>
            <person name="Tran P.L."/>
            <person name="Moran N.A."/>
            <person name="Eisen J.A."/>
        </authorList>
    </citation>
    <scope>NUCLEOTIDE SEQUENCE [LARGE SCALE GENOMIC DNA]</scope>
</reference>
<proteinExistence type="inferred from homology"/>
<accession>Q1LT98</accession>